<gene>
    <name evidence="2" type="primary">tuf</name>
    <name type="ordered locus">Pput_0473</name>
    <name type="ordered locus">Pput_0485</name>
</gene>
<comment type="function">
    <text evidence="2">GTP hydrolase that promotes the GTP-dependent binding of aminoacyl-tRNA to the A-site of ribosomes during protein biosynthesis.</text>
</comment>
<comment type="catalytic activity">
    <reaction evidence="2">
        <text>GTP + H2O = GDP + phosphate + H(+)</text>
        <dbReference type="Rhea" id="RHEA:19669"/>
        <dbReference type="ChEBI" id="CHEBI:15377"/>
        <dbReference type="ChEBI" id="CHEBI:15378"/>
        <dbReference type="ChEBI" id="CHEBI:37565"/>
        <dbReference type="ChEBI" id="CHEBI:43474"/>
        <dbReference type="ChEBI" id="CHEBI:58189"/>
        <dbReference type="EC" id="3.6.5.3"/>
    </reaction>
    <physiologicalReaction direction="left-to-right" evidence="2">
        <dbReference type="Rhea" id="RHEA:19670"/>
    </physiologicalReaction>
</comment>
<comment type="subunit">
    <text evidence="2">Monomer.</text>
</comment>
<comment type="subcellular location">
    <subcellularLocation>
        <location evidence="2">Cytoplasm</location>
    </subcellularLocation>
</comment>
<comment type="similarity">
    <text evidence="2">Belongs to the TRAFAC class translation factor GTPase superfamily. Classic translation factor GTPase family. EF-Tu/EF-1A subfamily.</text>
</comment>
<name>EFTU_PSEP1</name>
<dbReference type="EC" id="3.6.5.3" evidence="2"/>
<dbReference type="EMBL" id="CP000712">
    <property type="protein sequence ID" value="ABQ76643.1"/>
    <property type="molecule type" value="Genomic_DNA"/>
</dbReference>
<dbReference type="EMBL" id="CP000712">
    <property type="protein sequence ID" value="ABQ76655.1"/>
    <property type="molecule type" value="Genomic_DNA"/>
</dbReference>
<dbReference type="SMR" id="A5VXN3"/>
<dbReference type="KEGG" id="ppf:Pput_0473"/>
<dbReference type="KEGG" id="ppf:Pput_0485"/>
<dbReference type="eggNOG" id="COG0050">
    <property type="taxonomic scope" value="Bacteria"/>
</dbReference>
<dbReference type="HOGENOM" id="CLU_007265_0_0_6"/>
<dbReference type="GO" id="GO:0005829">
    <property type="term" value="C:cytosol"/>
    <property type="evidence" value="ECO:0007669"/>
    <property type="project" value="TreeGrafter"/>
</dbReference>
<dbReference type="GO" id="GO:0005525">
    <property type="term" value="F:GTP binding"/>
    <property type="evidence" value="ECO:0007669"/>
    <property type="project" value="UniProtKB-UniRule"/>
</dbReference>
<dbReference type="GO" id="GO:0003924">
    <property type="term" value="F:GTPase activity"/>
    <property type="evidence" value="ECO:0007669"/>
    <property type="project" value="InterPro"/>
</dbReference>
<dbReference type="GO" id="GO:0097216">
    <property type="term" value="F:guanosine tetraphosphate binding"/>
    <property type="evidence" value="ECO:0007669"/>
    <property type="project" value="UniProtKB-ARBA"/>
</dbReference>
<dbReference type="GO" id="GO:0003746">
    <property type="term" value="F:translation elongation factor activity"/>
    <property type="evidence" value="ECO:0007669"/>
    <property type="project" value="UniProtKB-UniRule"/>
</dbReference>
<dbReference type="CDD" id="cd01884">
    <property type="entry name" value="EF_Tu"/>
    <property type="match status" value="1"/>
</dbReference>
<dbReference type="CDD" id="cd03697">
    <property type="entry name" value="EFTU_II"/>
    <property type="match status" value="1"/>
</dbReference>
<dbReference type="CDD" id="cd03707">
    <property type="entry name" value="EFTU_III"/>
    <property type="match status" value="1"/>
</dbReference>
<dbReference type="FunFam" id="2.40.30.10:FF:000001">
    <property type="entry name" value="Elongation factor Tu"/>
    <property type="match status" value="1"/>
</dbReference>
<dbReference type="FunFam" id="3.40.50.300:FF:000003">
    <property type="entry name" value="Elongation factor Tu"/>
    <property type="match status" value="1"/>
</dbReference>
<dbReference type="Gene3D" id="3.40.50.300">
    <property type="entry name" value="P-loop containing nucleotide triphosphate hydrolases"/>
    <property type="match status" value="1"/>
</dbReference>
<dbReference type="Gene3D" id="2.40.30.10">
    <property type="entry name" value="Translation factors"/>
    <property type="match status" value="2"/>
</dbReference>
<dbReference type="HAMAP" id="MF_00118_B">
    <property type="entry name" value="EF_Tu_B"/>
    <property type="match status" value="1"/>
</dbReference>
<dbReference type="InterPro" id="IPR041709">
    <property type="entry name" value="EF-Tu_GTP-bd"/>
</dbReference>
<dbReference type="InterPro" id="IPR050055">
    <property type="entry name" value="EF-Tu_GTPase"/>
</dbReference>
<dbReference type="InterPro" id="IPR004161">
    <property type="entry name" value="EFTu-like_2"/>
</dbReference>
<dbReference type="InterPro" id="IPR033720">
    <property type="entry name" value="EFTU_2"/>
</dbReference>
<dbReference type="InterPro" id="IPR031157">
    <property type="entry name" value="G_TR_CS"/>
</dbReference>
<dbReference type="InterPro" id="IPR027417">
    <property type="entry name" value="P-loop_NTPase"/>
</dbReference>
<dbReference type="InterPro" id="IPR005225">
    <property type="entry name" value="Small_GTP-bd"/>
</dbReference>
<dbReference type="InterPro" id="IPR000795">
    <property type="entry name" value="T_Tr_GTP-bd_dom"/>
</dbReference>
<dbReference type="InterPro" id="IPR009000">
    <property type="entry name" value="Transl_B-barrel_sf"/>
</dbReference>
<dbReference type="InterPro" id="IPR009001">
    <property type="entry name" value="Transl_elong_EF1A/Init_IF2_C"/>
</dbReference>
<dbReference type="InterPro" id="IPR004541">
    <property type="entry name" value="Transl_elong_EFTu/EF1A_bac/org"/>
</dbReference>
<dbReference type="InterPro" id="IPR004160">
    <property type="entry name" value="Transl_elong_EFTu/EF1A_C"/>
</dbReference>
<dbReference type="NCBIfam" id="TIGR00485">
    <property type="entry name" value="EF-Tu"/>
    <property type="match status" value="1"/>
</dbReference>
<dbReference type="NCBIfam" id="NF000766">
    <property type="entry name" value="PRK00049.1"/>
    <property type="match status" value="1"/>
</dbReference>
<dbReference type="NCBIfam" id="NF009372">
    <property type="entry name" value="PRK12735.1"/>
    <property type="match status" value="1"/>
</dbReference>
<dbReference type="NCBIfam" id="NF009373">
    <property type="entry name" value="PRK12736.1"/>
    <property type="match status" value="1"/>
</dbReference>
<dbReference type="NCBIfam" id="TIGR00231">
    <property type="entry name" value="small_GTP"/>
    <property type="match status" value="1"/>
</dbReference>
<dbReference type="PANTHER" id="PTHR43721:SF22">
    <property type="entry name" value="ELONGATION FACTOR TU, MITOCHONDRIAL"/>
    <property type="match status" value="1"/>
</dbReference>
<dbReference type="PANTHER" id="PTHR43721">
    <property type="entry name" value="ELONGATION FACTOR TU-RELATED"/>
    <property type="match status" value="1"/>
</dbReference>
<dbReference type="Pfam" id="PF00009">
    <property type="entry name" value="GTP_EFTU"/>
    <property type="match status" value="1"/>
</dbReference>
<dbReference type="Pfam" id="PF03144">
    <property type="entry name" value="GTP_EFTU_D2"/>
    <property type="match status" value="1"/>
</dbReference>
<dbReference type="Pfam" id="PF03143">
    <property type="entry name" value="GTP_EFTU_D3"/>
    <property type="match status" value="1"/>
</dbReference>
<dbReference type="PRINTS" id="PR00315">
    <property type="entry name" value="ELONGATNFCT"/>
</dbReference>
<dbReference type="SUPFAM" id="SSF50465">
    <property type="entry name" value="EF-Tu/eEF-1alpha/eIF2-gamma C-terminal domain"/>
    <property type="match status" value="1"/>
</dbReference>
<dbReference type="SUPFAM" id="SSF52540">
    <property type="entry name" value="P-loop containing nucleoside triphosphate hydrolases"/>
    <property type="match status" value="1"/>
</dbReference>
<dbReference type="SUPFAM" id="SSF50447">
    <property type="entry name" value="Translation proteins"/>
    <property type="match status" value="1"/>
</dbReference>
<dbReference type="PROSITE" id="PS00301">
    <property type="entry name" value="G_TR_1"/>
    <property type="match status" value="1"/>
</dbReference>
<dbReference type="PROSITE" id="PS51722">
    <property type="entry name" value="G_TR_2"/>
    <property type="match status" value="1"/>
</dbReference>
<keyword id="KW-0963">Cytoplasm</keyword>
<keyword id="KW-0251">Elongation factor</keyword>
<keyword id="KW-0342">GTP-binding</keyword>
<keyword id="KW-0378">Hydrolase</keyword>
<keyword id="KW-0460">Magnesium</keyword>
<keyword id="KW-0479">Metal-binding</keyword>
<keyword id="KW-0547">Nucleotide-binding</keyword>
<keyword id="KW-0648">Protein biosynthesis</keyword>
<sequence>MAKEKFDRSLPHVNVGTIGHVDHGKTTLTAALTRVCSEVFGSAIVEFDKIDSAPEEKARGITINTAHVEYNSTIRHYAHVDCPGHADYVKNMITGAAQMDGAILVCSAADGPMPQTREHILLSRQVGVPYIVVFLNKADLVDDAELLELVEMEVRDLLSTYDFPGDDTPIIIGSARMALEGKDDNEMGTTAVKKLVETLDSYIPEPVRAIDQPFLMPIEDVFSISGRGTVVTGRIERGIVRVQDPLEIVGLRDTTTTTCTGVEMFRKLLDEGRAGENCGVLLRGTKRDDVERGQVLVKPGSVKPHTKFTAEVYVLSKEEGGRHTPFFKGYRPQFYFRTTDVTGNCELPEGVEMVMPGDNIQMTVTLIKTIAMEDGLRFAIREGGRTVGAGVVAKIIE</sequence>
<evidence type="ECO:0000250" key="1"/>
<evidence type="ECO:0000255" key="2">
    <source>
        <dbReference type="HAMAP-Rule" id="MF_00118"/>
    </source>
</evidence>
<proteinExistence type="inferred from homology"/>
<reference key="1">
    <citation type="submission" date="2007-05" db="EMBL/GenBank/DDBJ databases">
        <title>Complete sequence of Pseudomonas putida F1.</title>
        <authorList>
            <consortium name="US DOE Joint Genome Institute"/>
            <person name="Copeland A."/>
            <person name="Lucas S."/>
            <person name="Lapidus A."/>
            <person name="Barry K."/>
            <person name="Detter J.C."/>
            <person name="Glavina del Rio T."/>
            <person name="Hammon N."/>
            <person name="Israni S."/>
            <person name="Dalin E."/>
            <person name="Tice H."/>
            <person name="Pitluck S."/>
            <person name="Chain P."/>
            <person name="Malfatti S."/>
            <person name="Shin M."/>
            <person name="Vergez L."/>
            <person name="Schmutz J."/>
            <person name="Larimer F."/>
            <person name="Land M."/>
            <person name="Hauser L."/>
            <person name="Kyrpides N."/>
            <person name="Lykidis A."/>
            <person name="Parales R."/>
            <person name="Richardson P."/>
        </authorList>
    </citation>
    <scope>NUCLEOTIDE SEQUENCE [LARGE SCALE GENOMIC DNA]</scope>
    <source>
        <strain>ATCC 700007 / DSM 6899 / JCM 31910 / BCRC 17059 / LMG 24140 / F1</strain>
    </source>
</reference>
<protein>
    <recommendedName>
        <fullName evidence="2">Elongation factor Tu</fullName>
        <shortName evidence="2">EF-Tu</shortName>
        <ecNumber evidence="2">3.6.5.3</ecNumber>
    </recommendedName>
</protein>
<feature type="chain" id="PRO_1000015735" description="Elongation factor Tu">
    <location>
        <begin position="1"/>
        <end position="397"/>
    </location>
</feature>
<feature type="domain" description="tr-type G">
    <location>
        <begin position="10"/>
        <end position="207"/>
    </location>
</feature>
<feature type="region of interest" description="G1" evidence="1">
    <location>
        <begin position="19"/>
        <end position="26"/>
    </location>
</feature>
<feature type="region of interest" description="G2" evidence="1">
    <location>
        <begin position="60"/>
        <end position="64"/>
    </location>
</feature>
<feature type="region of interest" description="G3" evidence="1">
    <location>
        <begin position="81"/>
        <end position="84"/>
    </location>
</feature>
<feature type="region of interest" description="G4" evidence="1">
    <location>
        <begin position="136"/>
        <end position="139"/>
    </location>
</feature>
<feature type="region of interest" description="G5" evidence="1">
    <location>
        <begin position="174"/>
        <end position="176"/>
    </location>
</feature>
<feature type="binding site" evidence="2">
    <location>
        <begin position="19"/>
        <end position="26"/>
    </location>
    <ligand>
        <name>GTP</name>
        <dbReference type="ChEBI" id="CHEBI:37565"/>
    </ligand>
</feature>
<feature type="binding site" evidence="2">
    <location>
        <position position="26"/>
    </location>
    <ligand>
        <name>Mg(2+)</name>
        <dbReference type="ChEBI" id="CHEBI:18420"/>
    </ligand>
</feature>
<feature type="binding site" evidence="2">
    <location>
        <begin position="81"/>
        <end position="85"/>
    </location>
    <ligand>
        <name>GTP</name>
        <dbReference type="ChEBI" id="CHEBI:37565"/>
    </ligand>
</feature>
<feature type="binding site" evidence="2">
    <location>
        <begin position="136"/>
        <end position="139"/>
    </location>
    <ligand>
        <name>GTP</name>
        <dbReference type="ChEBI" id="CHEBI:37565"/>
    </ligand>
</feature>
<accession>A5VXN3</accession>
<organism>
    <name type="scientific">Pseudomonas putida (strain ATCC 700007 / DSM 6899 / JCM 31910 / BCRC 17059 / LMG 24140 / F1)</name>
    <dbReference type="NCBI Taxonomy" id="351746"/>
    <lineage>
        <taxon>Bacteria</taxon>
        <taxon>Pseudomonadati</taxon>
        <taxon>Pseudomonadota</taxon>
        <taxon>Gammaproteobacteria</taxon>
        <taxon>Pseudomonadales</taxon>
        <taxon>Pseudomonadaceae</taxon>
        <taxon>Pseudomonas</taxon>
    </lineage>
</organism>